<sequence length="738" mass="81818">MATKFPSFSQGLAQDPTTRRIWYGIATAHDFESHDGMTEEKLYQKLFSTHFGHLAIIGLWVSGNLFHIAWQGNFEQWVADPLHVRPIAHAIWDPHFGQGAIDAFTQAGASSPVNIAYSGLYHWFYTIGMTTNAELYQGSIFMMILSAWALFAGWLHLQPKFRPSLAWFKNAESRLNHHLAVLFGFSSIAWTGHLVHVAIPESRGQHVGWDNFLNVMPHPAGLGPFFTGNWGVYAQNPDTMGQVFGSAEGSGTAILTFLGGFHPQTEALWLTDIAHHHLAIGVIFVIAGHMYRTNFGIGHSIREILEAHNPPQGTPGDLGAGHKGLYDTINNSLHFQLGLALASLGVVTSLVAQHMYAMPSYAFIAKDYTTQAALYTHHQYIAIFLMCGAFAHGAIFFIRDYDPEANKDNVLARMLEHKEAIISHLSWVSLFLGFHTLGLYVHNDVVVAFGTPEKQILVEPVFAQFVQAASGKAIYGFDVLLANTGGVAANANAAYMGGWMDAINGVRGSNDLFLPIGPGDFLVHHAIALGLHTTTLILVKGALDARGSKLMPDKKDFGYSFPCDGPGRGGTCDISAWDAFYLAVFWALNTVGWVTFYWHWKHLAIWQGNVAQFNESSTYLMGWFRDYLWLNSSQLINGYNPFGSNNLAVWAWMFLFGHLVWATGFMFLISWRGYWQELIETIVWAHQRTPLANLVGWRDKPVALSIVQARVVGLAHFTIGYILTYAAFLIASTSGKFG</sequence>
<dbReference type="EC" id="1.97.1.12" evidence="1"/>
<dbReference type="EMBL" id="AJ133190">
    <property type="protein sequence ID" value="CAB64209.1"/>
    <property type="molecule type" value="Genomic_DNA"/>
</dbReference>
<dbReference type="EMBL" id="CT971583">
    <property type="protein sequence ID" value="CAK22818.1"/>
    <property type="molecule type" value="Genomic_DNA"/>
</dbReference>
<dbReference type="SMR" id="Q9R6T9"/>
<dbReference type="STRING" id="32051.SynWH7803_0392"/>
<dbReference type="KEGG" id="syx:SynWH7803_0392"/>
<dbReference type="eggNOG" id="COG2885">
    <property type="taxonomic scope" value="Bacteria"/>
</dbReference>
<dbReference type="HOGENOM" id="CLU_016126_1_0_3"/>
<dbReference type="OrthoDB" id="499313at2"/>
<dbReference type="Proteomes" id="UP000001566">
    <property type="component" value="Chromosome"/>
</dbReference>
<dbReference type="GO" id="GO:0009522">
    <property type="term" value="C:photosystem I"/>
    <property type="evidence" value="ECO:0007669"/>
    <property type="project" value="UniProtKB-KW"/>
</dbReference>
<dbReference type="GO" id="GO:0031676">
    <property type="term" value="C:plasma membrane-derived thylakoid membrane"/>
    <property type="evidence" value="ECO:0007669"/>
    <property type="project" value="UniProtKB-SubCell"/>
</dbReference>
<dbReference type="GO" id="GO:0051539">
    <property type="term" value="F:4 iron, 4 sulfur cluster binding"/>
    <property type="evidence" value="ECO:0007669"/>
    <property type="project" value="UniProtKB-KW"/>
</dbReference>
<dbReference type="GO" id="GO:0016168">
    <property type="term" value="F:chlorophyll binding"/>
    <property type="evidence" value="ECO:0007669"/>
    <property type="project" value="UniProtKB-KW"/>
</dbReference>
<dbReference type="GO" id="GO:0009055">
    <property type="term" value="F:electron transfer activity"/>
    <property type="evidence" value="ECO:0007669"/>
    <property type="project" value="UniProtKB-UniRule"/>
</dbReference>
<dbReference type="GO" id="GO:0000287">
    <property type="term" value="F:magnesium ion binding"/>
    <property type="evidence" value="ECO:0007669"/>
    <property type="project" value="UniProtKB-UniRule"/>
</dbReference>
<dbReference type="GO" id="GO:0016491">
    <property type="term" value="F:oxidoreductase activity"/>
    <property type="evidence" value="ECO:0007669"/>
    <property type="project" value="UniProtKB-KW"/>
</dbReference>
<dbReference type="GO" id="GO:0015979">
    <property type="term" value="P:photosynthesis"/>
    <property type="evidence" value="ECO:0007669"/>
    <property type="project" value="UniProtKB-UniRule"/>
</dbReference>
<dbReference type="FunFam" id="1.20.1130.10:FF:000001">
    <property type="entry name" value="Photosystem I P700 chlorophyll a apoprotein A2"/>
    <property type="match status" value="1"/>
</dbReference>
<dbReference type="Gene3D" id="1.20.1130.10">
    <property type="entry name" value="Photosystem I PsaA/PsaB"/>
    <property type="match status" value="1"/>
</dbReference>
<dbReference type="HAMAP" id="MF_00482">
    <property type="entry name" value="PSI_PsaB"/>
    <property type="match status" value="1"/>
</dbReference>
<dbReference type="InterPro" id="IPR001280">
    <property type="entry name" value="PSI_PsaA/B"/>
</dbReference>
<dbReference type="InterPro" id="IPR020586">
    <property type="entry name" value="PSI_PsaA/B_CS"/>
</dbReference>
<dbReference type="InterPro" id="IPR036408">
    <property type="entry name" value="PSI_PsaA/B_sf"/>
</dbReference>
<dbReference type="InterPro" id="IPR006244">
    <property type="entry name" value="PSI_PsaB"/>
</dbReference>
<dbReference type="NCBIfam" id="TIGR01336">
    <property type="entry name" value="psaB"/>
    <property type="match status" value="1"/>
</dbReference>
<dbReference type="PANTHER" id="PTHR30128">
    <property type="entry name" value="OUTER MEMBRANE PROTEIN, OMPA-RELATED"/>
    <property type="match status" value="1"/>
</dbReference>
<dbReference type="PANTHER" id="PTHR30128:SF19">
    <property type="entry name" value="PHOTOSYSTEM I P700 CHLOROPHYLL A APOPROTEIN A1-RELATED"/>
    <property type="match status" value="1"/>
</dbReference>
<dbReference type="Pfam" id="PF00223">
    <property type="entry name" value="PsaA_PsaB"/>
    <property type="match status" value="1"/>
</dbReference>
<dbReference type="PIRSF" id="PIRSF002905">
    <property type="entry name" value="PSI_A"/>
    <property type="match status" value="1"/>
</dbReference>
<dbReference type="PRINTS" id="PR00257">
    <property type="entry name" value="PHOTSYSPSAAB"/>
</dbReference>
<dbReference type="SUPFAM" id="SSF81558">
    <property type="entry name" value="Photosystem I subunits PsaA/PsaB"/>
    <property type="match status" value="1"/>
</dbReference>
<dbReference type="PROSITE" id="PS00419">
    <property type="entry name" value="PHOTOSYSTEM_I_PSAAB"/>
    <property type="match status" value="1"/>
</dbReference>
<organism>
    <name type="scientific">Synechococcus sp. (strain WH7803)</name>
    <dbReference type="NCBI Taxonomy" id="32051"/>
    <lineage>
        <taxon>Bacteria</taxon>
        <taxon>Bacillati</taxon>
        <taxon>Cyanobacteriota</taxon>
        <taxon>Cyanophyceae</taxon>
        <taxon>Synechococcales</taxon>
        <taxon>Synechococcaceae</taxon>
        <taxon>Synechococcus</taxon>
    </lineage>
</organism>
<protein>
    <recommendedName>
        <fullName evidence="1">Photosystem I P700 chlorophyll a apoprotein A2</fullName>
        <ecNumber evidence="1">1.97.1.12</ecNumber>
    </recommendedName>
    <alternativeName>
        <fullName evidence="1">PsaB</fullName>
    </alternativeName>
</protein>
<accession>Q9R6T9</accession>
<accession>A5GIQ3</accession>
<feature type="chain" id="PRO_0000088656" description="Photosystem I P700 chlorophyll a apoprotein A2">
    <location>
        <begin position="1"/>
        <end position="738"/>
    </location>
</feature>
<feature type="transmembrane region" description="Helical; Name=I" evidence="1">
    <location>
        <begin position="46"/>
        <end position="69"/>
    </location>
</feature>
<feature type="transmembrane region" description="Helical; Name=II" evidence="1">
    <location>
        <begin position="135"/>
        <end position="158"/>
    </location>
</feature>
<feature type="transmembrane region" description="Helical; Name=III" evidence="1">
    <location>
        <begin position="175"/>
        <end position="199"/>
    </location>
</feature>
<feature type="transmembrane region" description="Helical; Name=IV" evidence="1">
    <location>
        <begin position="273"/>
        <end position="291"/>
    </location>
</feature>
<feature type="transmembrane region" description="Helical; Name=V" evidence="1">
    <location>
        <begin position="333"/>
        <end position="356"/>
    </location>
</feature>
<feature type="transmembrane region" description="Helical; Name=VI" evidence="1">
    <location>
        <begin position="372"/>
        <end position="398"/>
    </location>
</feature>
<feature type="transmembrane region" description="Helical; Name=VII" evidence="1">
    <location>
        <begin position="420"/>
        <end position="442"/>
    </location>
</feature>
<feature type="transmembrane region" description="Helical; Name=VIII" evidence="1">
    <location>
        <begin position="521"/>
        <end position="539"/>
    </location>
</feature>
<feature type="transmembrane region" description="Helical; Name=IX" evidence="1">
    <location>
        <begin position="579"/>
        <end position="600"/>
    </location>
</feature>
<feature type="transmembrane region" description="Helical; Name=X" evidence="1">
    <location>
        <begin position="647"/>
        <end position="669"/>
    </location>
</feature>
<feature type="transmembrane region" description="Helical; Name=XI" evidence="1">
    <location>
        <begin position="711"/>
        <end position="731"/>
    </location>
</feature>
<feature type="binding site" evidence="1">
    <location>
        <position position="563"/>
    </location>
    <ligand>
        <name>[4Fe-4S] cluster</name>
        <dbReference type="ChEBI" id="CHEBI:49883"/>
        <note>ligand shared between dimeric partners</note>
    </ligand>
</feature>
<feature type="binding site" evidence="1">
    <location>
        <position position="572"/>
    </location>
    <ligand>
        <name>[4Fe-4S] cluster</name>
        <dbReference type="ChEBI" id="CHEBI:49883"/>
        <note>ligand shared between dimeric partners</note>
    </ligand>
</feature>
<feature type="binding site" description="axial binding residue" evidence="1">
    <location>
        <position position="658"/>
    </location>
    <ligand>
        <name>chlorophyll a</name>
        <dbReference type="ChEBI" id="CHEBI:58416"/>
        <label>B1</label>
    </ligand>
    <ligandPart>
        <name>Mg</name>
        <dbReference type="ChEBI" id="CHEBI:25107"/>
    </ligandPart>
</feature>
<feature type="binding site" description="axial binding residue" evidence="1">
    <location>
        <position position="666"/>
    </location>
    <ligand>
        <name>chlorophyll a</name>
        <dbReference type="ChEBI" id="CHEBI:58416"/>
        <label>B3</label>
    </ligand>
    <ligandPart>
        <name>Mg</name>
        <dbReference type="ChEBI" id="CHEBI:25107"/>
    </ligandPart>
</feature>
<feature type="binding site" evidence="1">
    <location>
        <position position="674"/>
    </location>
    <ligand>
        <name>chlorophyll a</name>
        <dbReference type="ChEBI" id="CHEBI:58416"/>
        <label>B3</label>
    </ligand>
</feature>
<feature type="binding site" evidence="1">
    <location>
        <position position="675"/>
    </location>
    <ligand>
        <name>phylloquinone</name>
        <dbReference type="ChEBI" id="CHEBI:18067"/>
        <label>B</label>
    </ligand>
</feature>
<gene>
    <name evidence="1" type="primary">psaB</name>
    <name type="ordered locus">SynWH7803_0392</name>
</gene>
<evidence type="ECO:0000255" key="1">
    <source>
        <dbReference type="HAMAP-Rule" id="MF_00482"/>
    </source>
</evidence>
<keyword id="KW-0004">4Fe-4S</keyword>
<keyword id="KW-0148">Chlorophyll</keyword>
<keyword id="KW-0157">Chromophore</keyword>
<keyword id="KW-0249">Electron transport</keyword>
<keyword id="KW-0408">Iron</keyword>
<keyword id="KW-0411">Iron-sulfur</keyword>
<keyword id="KW-0460">Magnesium</keyword>
<keyword id="KW-0472">Membrane</keyword>
<keyword id="KW-0479">Metal-binding</keyword>
<keyword id="KW-0560">Oxidoreductase</keyword>
<keyword id="KW-0602">Photosynthesis</keyword>
<keyword id="KW-0603">Photosystem I</keyword>
<keyword id="KW-1185">Reference proteome</keyword>
<keyword id="KW-0793">Thylakoid</keyword>
<keyword id="KW-0812">Transmembrane</keyword>
<keyword id="KW-1133">Transmembrane helix</keyword>
<keyword id="KW-0813">Transport</keyword>
<comment type="function">
    <text evidence="1">PsaA and PsaB bind P700, the primary electron donor of photosystem I (PSI), as well as the electron acceptors A0, A1 and FX. PSI is a plastocyanin/cytochrome c6-ferredoxin oxidoreductase, converting photonic excitation into a charge separation, which transfers an electron from the donor P700 chlorophyll pair to the spectroscopically characterized acceptors A0, A1, FX, FA and FB in turn. Oxidized P700 is reduced on the lumenal side of the thylakoid membrane by plastocyanin or cytochrome c6.</text>
</comment>
<comment type="catalytic activity">
    <reaction evidence="1">
        <text>reduced [plastocyanin] + hnu + oxidized [2Fe-2S]-[ferredoxin] = oxidized [plastocyanin] + reduced [2Fe-2S]-[ferredoxin]</text>
        <dbReference type="Rhea" id="RHEA:30407"/>
        <dbReference type="Rhea" id="RHEA-COMP:10000"/>
        <dbReference type="Rhea" id="RHEA-COMP:10001"/>
        <dbReference type="Rhea" id="RHEA-COMP:10039"/>
        <dbReference type="Rhea" id="RHEA-COMP:10040"/>
        <dbReference type="ChEBI" id="CHEBI:29036"/>
        <dbReference type="ChEBI" id="CHEBI:30212"/>
        <dbReference type="ChEBI" id="CHEBI:33737"/>
        <dbReference type="ChEBI" id="CHEBI:33738"/>
        <dbReference type="ChEBI" id="CHEBI:49552"/>
        <dbReference type="EC" id="1.97.1.12"/>
    </reaction>
</comment>
<comment type="cofactor">
    <text evidence="1">PSI electron transfer chain: 5 chlorophyll a, 1 chlorophyll a', 2 phylloquinones and 3 4Fe-4S clusters. PSI core antenna: 90 chlorophyll a, 22 carotenoids, 3 phospholipids and 1 galactolipid. P700 is a chlorophyll a/chlorophyll a' dimer, A0 is one or more chlorophyll a, A1 is one or both phylloquinones and FX is a shared 4Fe-4S iron-sulfur center.</text>
</comment>
<comment type="subunit">
    <text evidence="1">The PsaA/B heterodimer binds the P700 chlorophyll special pair and subsequent electron acceptors. PSI consists of a core antenna complex that captures photons, and an electron transfer chain that converts photonic excitation into a charge separation. The cyanobacterial PSI reaction center is composed of one copy each of PsaA,B,C,D,E,F,I,J,K,L,M and X, and forms trimeric complexes.</text>
</comment>
<comment type="subcellular location">
    <subcellularLocation>
        <location evidence="1">Cellular thylakoid membrane</location>
        <topology evidence="1">Multi-pass membrane protein</topology>
    </subcellularLocation>
</comment>
<comment type="similarity">
    <text evidence="1">Belongs to the PsaA/PsaB family.</text>
</comment>
<reference key="1">
    <citation type="journal article" date="2000" name="Photosyn. Res.">
        <title>Rapid evolutionary divergence of photosystem I core subunits PsaA and PsaB in the marine prokaryote Prochlorococcus.</title>
        <authorList>
            <person name="van der Staay G.W.M."/>
            <person name="Moon-van der Staay S.Y."/>
            <person name="Garczarek L."/>
            <person name="Partensky F."/>
        </authorList>
    </citation>
    <scope>NUCLEOTIDE SEQUENCE [GENOMIC DNA]</scope>
</reference>
<reference key="2">
    <citation type="submission" date="2006-05" db="EMBL/GenBank/DDBJ databases">
        <authorList>
            <consortium name="Genoscope"/>
        </authorList>
    </citation>
    <scope>NUCLEOTIDE SEQUENCE [LARGE SCALE GENOMIC DNA]</scope>
    <source>
        <strain>WH7803</strain>
    </source>
</reference>
<proteinExistence type="inferred from homology"/>
<name>PSAB_SYNPW</name>